<reference key="1">
    <citation type="journal article" date="2002" name="Proc. Natl. Acad. Sci. U.S.A.">
        <title>Complete genome sequence and comparative genomic analysis of an emerging human pathogen, serotype V Streptococcus agalactiae.</title>
        <authorList>
            <person name="Tettelin H."/>
            <person name="Masignani V."/>
            <person name="Cieslewicz M.J."/>
            <person name="Eisen J.A."/>
            <person name="Peterson S.N."/>
            <person name="Wessels M.R."/>
            <person name="Paulsen I.T."/>
            <person name="Nelson K.E."/>
            <person name="Margarit I."/>
            <person name="Read T.D."/>
            <person name="Madoff L.C."/>
            <person name="Wolf A.M."/>
            <person name="Beanan M.J."/>
            <person name="Brinkac L.M."/>
            <person name="Daugherty S.C."/>
            <person name="DeBoy R.T."/>
            <person name="Durkin A.S."/>
            <person name="Kolonay J.F."/>
            <person name="Madupu R."/>
            <person name="Lewis M.R."/>
            <person name="Radune D."/>
            <person name="Fedorova N.B."/>
            <person name="Scanlan D."/>
            <person name="Khouri H.M."/>
            <person name="Mulligan S."/>
            <person name="Carty H.A."/>
            <person name="Cline R.T."/>
            <person name="Van Aken S.E."/>
            <person name="Gill J."/>
            <person name="Scarselli M."/>
            <person name="Mora M."/>
            <person name="Iacobini E.T."/>
            <person name="Brettoni C."/>
            <person name="Galli G."/>
            <person name="Mariani M."/>
            <person name="Vegni F."/>
            <person name="Maione D."/>
            <person name="Rinaudo D."/>
            <person name="Rappuoli R."/>
            <person name="Telford J.L."/>
            <person name="Kasper D.L."/>
            <person name="Grandi G."/>
            <person name="Fraser C.M."/>
        </authorList>
    </citation>
    <scope>NUCLEOTIDE SEQUENCE [LARGE SCALE GENOMIC DNA]</scope>
    <source>
        <strain>ATCC BAA-611 / 2603 V/R</strain>
    </source>
</reference>
<organism>
    <name type="scientific">Streptococcus agalactiae serotype V (strain ATCC BAA-611 / 2603 V/R)</name>
    <dbReference type="NCBI Taxonomy" id="208435"/>
    <lineage>
        <taxon>Bacteria</taxon>
        <taxon>Bacillati</taxon>
        <taxon>Bacillota</taxon>
        <taxon>Bacilli</taxon>
        <taxon>Lactobacillales</taxon>
        <taxon>Streptococcaceae</taxon>
        <taxon>Streptococcus</taxon>
    </lineage>
</organism>
<keyword id="KW-0028">Amino-acid biosynthesis</keyword>
<keyword id="KW-0061">Asparagine biosynthesis</keyword>
<keyword id="KW-0067">ATP-binding</keyword>
<keyword id="KW-0963">Cytoplasm</keyword>
<keyword id="KW-0436">Ligase</keyword>
<keyword id="KW-0547">Nucleotide-binding</keyword>
<keyword id="KW-1185">Reference proteome</keyword>
<comment type="catalytic activity">
    <reaction evidence="1">
        <text>L-aspartate + NH4(+) + ATP = L-asparagine + AMP + diphosphate + H(+)</text>
        <dbReference type="Rhea" id="RHEA:11372"/>
        <dbReference type="ChEBI" id="CHEBI:15378"/>
        <dbReference type="ChEBI" id="CHEBI:28938"/>
        <dbReference type="ChEBI" id="CHEBI:29991"/>
        <dbReference type="ChEBI" id="CHEBI:30616"/>
        <dbReference type="ChEBI" id="CHEBI:33019"/>
        <dbReference type="ChEBI" id="CHEBI:58048"/>
        <dbReference type="ChEBI" id="CHEBI:456215"/>
        <dbReference type="EC" id="6.3.1.1"/>
    </reaction>
</comment>
<comment type="pathway">
    <text evidence="1">Amino-acid biosynthesis; L-asparagine biosynthesis; L-asparagine from L-aspartate (ammonia route): step 1/1.</text>
</comment>
<comment type="subcellular location">
    <subcellularLocation>
        <location evidence="1">Cytoplasm</location>
    </subcellularLocation>
</comment>
<comment type="similarity">
    <text evidence="1">Belongs to the class-II aminoacyl-tRNA synthetase family. AsnA subfamily.</text>
</comment>
<accession>Q8E1B0</accession>
<evidence type="ECO:0000255" key="1">
    <source>
        <dbReference type="HAMAP-Rule" id="MF_00555"/>
    </source>
</evidence>
<protein>
    <recommendedName>
        <fullName evidence="1">Aspartate--ammonia ligase</fullName>
        <ecNumber evidence="1">6.3.1.1</ecNumber>
    </recommendedName>
    <alternativeName>
        <fullName evidence="1">Asparagine synthetase A</fullName>
    </alternativeName>
</protein>
<sequence>MKKSFIHQQQEISFVKNTFTQYLIDKLEIVEVQGPILSQVGDGMQDNLSGIEHPVSVKVLNIPEAEFEVVHSLAKWKRHTLARFGFNEGEGLFVHMKALRPDEDSLDPTHSVYVDQWDWEKVIPDGRRNLDYLKETVEKIYKAIRLTELAVEARFDIESILPKRITFIHTEELVEKYPDLSPKERENAIAKEYGAVFLIGIGGELADGKPHDGRAPDYDDWTTPSENGFKGLNGDILVWNEQLGTAFELSSMGIRVDEDALKRQVVLTGDEDRLEFEWHKTLLRGFFPLTIGGGIGQSRLAMFLLRKKHIGEVQSSVWPKEVRDTFENIL</sequence>
<proteinExistence type="inferred from homology"/>
<dbReference type="EC" id="6.3.1.1" evidence="1"/>
<dbReference type="EMBL" id="AE009948">
    <property type="protein sequence ID" value="AAM99353.1"/>
    <property type="molecule type" value="Genomic_DNA"/>
</dbReference>
<dbReference type="RefSeq" id="NP_687481.1">
    <property type="nucleotide sequence ID" value="NC_004116.1"/>
</dbReference>
<dbReference type="RefSeq" id="WP_000748011.1">
    <property type="nucleotide sequence ID" value="NC_004116.1"/>
</dbReference>
<dbReference type="SMR" id="Q8E1B0"/>
<dbReference type="STRING" id="208435.SAG0450"/>
<dbReference type="KEGG" id="sag:SAG0450"/>
<dbReference type="PATRIC" id="fig|208435.3.peg.447"/>
<dbReference type="HOGENOM" id="CLU_071543_0_0_9"/>
<dbReference type="OrthoDB" id="9766088at2"/>
<dbReference type="UniPathway" id="UPA00134">
    <property type="reaction ID" value="UER00194"/>
</dbReference>
<dbReference type="Proteomes" id="UP000000821">
    <property type="component" value="Chromosome"/>
</dbReference>
<dbReference type="GO" id="GO:0005829">
    <property type="term" value="C:cytosol"/>
    <property type="evidence" value="ECO:0007669"/>
    <property type="project" value="TreeGrafter"/>
</dbReference>
<dbReference type="GO" id="GO:0004071">
    <property type="term" value="F:aspartate-ammonia ligase activity"/>
    <property type="evidence" value="ECO:0007669"/>
    <property type="project" value="UniProtKB-UniRule"/>
</dbReference>
<dbReference type="GO" id="GO:0005524">
    <property type="term" value="F:ATP binding"/>
    <property type="evidence" value="ECO:0007669"/>
    <property type="project" value="UniProtKB-UniRule"/>
</dbReference>
<dbReference type="GO" id="GO:0140096">
    <property type="term" value="F:catalytic activity, acting on a protein"/>
    <property type="evidence" value="ECO:0007669"/>
    <property type="project" value="UniProtKB-ARBA"/>
</dbReference>
<dbReference type="GO" id="GO:0016740">
    <property type="term" value="F:transferase activity"/>
    <property type="evidence" value="ECO:0007669"/>
    <property type="project" value="UniProtKB-ARBA"/>
</dbReference>
<dbReference type="GO" id="GO:0070981">
    <property type="term" value="P:L-asparagine biosynthetic process"/>
    <property type="evidence" value="ECO:0007669"/>
    <property type="project" value="UniProtKB-UniRule"/>
</dbReference>
<dbReference type="CDD" id="cd00645">
    <property type="entry name" value="AsnA"/>
    <property type="match status" value="1"/>
</dbReference>
<dbReference type="Gene3D" id="3.30.930.10">
    <property type="entry name" value="Bira Bifunctional Protein, Domain 2"/>
    <property type="match status" value="1"/>
</dbReference>
<dbReference type="HAMAP" id="MF_00555">
    <property type="entry name" value="AsnA"/>
    <property type="match status" value="1"/>
</dbReference>
<dbReference type="InterPro" id="IPR006195">
    <property type="entry name" value="aa-tRNA-synth_II"/>
</dbReference>
<dbReference type="InterPro" id="IPR045864">
    <property type="entry name" value="aa-tRNA-synth_II/BPL/LPL"/>
</dbReference>
<dbReference type="InterPro" id="IPR004618">
    <property type="entry name" value="AsnA"/>
</dbReference>
<dbReference type="NCBIfam" id="TIGR00669">
    <property type="entry name" value="asnA"/>
    <property type="match status" value="1"/>
</dbReference>
<dbReference type="PANTHER" id="PTHR30073">
    <property type="entry name" value="ASPARTATE--AMMONIA LIGASE"/>
    <property type="match status" value="1"/>
</dbReference>
<dbReference type="PANTHER" id="PTHR30073:SF5">
    <property type="entry name" value="ASPARTATE--AMMONIA LIGASE"/>
    <property type="match status" value="1"/>
</dbReference>
<dbReference type="Pfam" id="PF03590">
    <property type="entry name" value="AsnA"/>
    <property type="match status" value="1"/>
</dbReference>
<dbReference type="PIRSF" id="PIRSF001555">
    <property type="entry name" value="Asp_ammon_ligase"/>
    <property type="match status" value="1"/>
</dbReference>
<dbReference type="SUPFAM" id="SSF55681">
    <property type="entry name" value="Class II aaRS and biotin synthetases"/>
    <property type="match status" value="1"/>
</dbReference>
<dbReference type="PROSITE" id="PS50862">
    <property type="entry name" value="AA_TRNA_LIGASE_II"/>
    <property type="match status" value="1"/>
</dbReference>
<name>ASNA_STRA5</name>
<feature type="chain" id="PRO_0000195890" description="Aspartate--ammonia ligase">
    <location>
        <begin position="1"/>
        <end position="330"/>
    </location>
</feature>
<gene>
    <name evidence="1" type="primary">asnA</name>
    <name type="ordered locus">SAG0450</name>
</gene>